<evidence type="ECO:0000255" key="1">
    <source>
        <dbReference type="HAMAP-Rule" id="MF_01345"/>
    </source>
</evidence>
<evidence type="ECO:0000305" key="2"/>
<accession>Q5HAT1</accession>
<accession>Q5FD67</accession>
<dbReference type="EMBL" id="CR767821">
    <property type="protein sequence ID" value="CAH58330.1"/>
    <property type="status" value="ALT_INIT"/>
    <property type="molecule type" value="Genomic_DNA"/>
</dbReference>
<dbReference type="EMBL" id="CR925678">
    <property type="protein sequence ID" value="CAI27123.1"/>
    <property type="molecule type" value="Genomic_DNA"/>
</dbReference>
<dbReference type="RefSeq" id="WP_011255720.1">
    <property type="nucleotide sequence ID" value="NC_005295.2"/>
</dbReference>
<dbReference type="SMR" id="Q5HAT1"/>
<dbReference type="GeneID" id="33057925"/>
<dbReference type="KEGG" id="eru:Erum5990"/>
<dbReference type="KEGG" id="erw:ERWE_CDS_06290"/>
<dbReference type="eggNOG" id="COG0186">
    <property type="taxonomic scope" value="Bacteria"/>
</dbReference>
<dbReference type="HOGENOM" id="CLU_073626_1_1_5"/>
<dbReference type="Proteomes" id="UP000001021">
    <property type="component" value="Chromosome"/>
</dbReference>
<dbReference type="GO" id="GO:0022627">
    <property type="term" value="C:cytosolic small ribosomal subunit"/>
    <property type="evidence" value="ECO:0007669"/>
    <property type="project" value="TreeGrafter"/>
</dbReference>
<dbReference type="GO" id="GO:0019843">
    <property type="term" value="F:rRNA binding"/>
    <property type="evidence" value="ECO:0007669"/>
    <property type="project" value="UniProtKB-UniRule"/>
</dbReference>
<dbReference type="GO" id="GO:0003735">
    <property type="term" value="F:structural constituent of ribosome"/>
    <property type="evidence" value="ECO:0007669"/>
    <property type="project" value="InterPro"/>
</dbReference>
<dbReference type="GO" id="GO:0006412">
    <property type="term" value="P:translation"/>
    <property type="evidence" value="ECO:0007669"/>
    <property type="project" value="UniProtKB-UniRule"/>
</dbReference>
<dbReference type="CDD" id="cd00364">
    <property type="entry name" value="Ribosomal_uS17"/>
    <property type="match status" value="1"/>
</dbReference>
<dbReference type="Gene3D" id="2.40.50.140">
    <property type="entry name" value="Nucleic acid-binding proteins"/>
    <property type="match status" value="1"/>
</dbReference>
<dbReference type="HAMAP" id="MF_01345_B">
    <property type="entry name" value="Ribosomal_uS17_B"/>
    <property type="match status" value="1"/>
</dbReference>
<dbReference type="InterPro" id="IPR012340">
    <property type="entry name" value="NA-bd_OB-fold"/>
</dbReference>
<dbReference type="InterPro" id="IPR000266">
    <property type="entry name" value="Ribosomal_uS17"/>
</dbReference>
<dbReference type="InterPro" id="IPR019984">
    <property type="entry name" value="Ribosomal_uS17_bact/chlr"/>
</dbReference>
<dbReference type="NCBIfam" id="NF004123">
    <property type="entry name" value="PRK05610.1"/>
    <property type="match status" value="1"/>
</dbReference>
<dbReference type="NCBIfam" id="TIGR03635">
    <property type="entry name" value="uS17_bact"/>
    <property type="match status" value="1"/>
</dbReference>
<dbReference type="PANTHER" id="PTHR10744">
    <property type="entry name" value="40S RIBOSOMAL PROTEIN S11 FAMILY MEMBER"/>
    <property type="match status" value="1"/>
</dbReference>
<dbReference type="PANTHER" id="PTHR10744:SF1">
    <property type="entry name" value="SMALL RIBOSOMAL SUBUNIT PROTEIN US17M"/>
    <property type="match status" value="1"/>
</dbReference>
<dbReference type="Pfam" id="PF00366">
    <property type="entry name" value="Ribosomal_S17"/>
    <property type="match status" value="1"/>
</dbReference>
<dbReference type="PRINTS" id="PR00973">
    <property type="entry name" value="RIBOSOMALS17"/>
</dbReference>
<dbReference type="SUPFAM" id="SSF50249">
    <property type="entry name" value="Nucleic acid-binding proteins"/>
    <property type="match status" value="1"/>
</dbReference>
<feature type="chain" id="PRO_0000255675" description="Small ribosomal subunit protein uS17">
    <location>
        <begin position="1"/>
        <end position="82"/>
    </location>
</feature>
<comment type="function">
    <text evidence="1">One of the primary rRNA binding proteins, it binds specifically to the 5'-end of 16S ribosomal RNA.</text>
</comment>
<comment type="subunit">
    <text evidence="1">Part of the 30S ribosomal subunit.</text>
</comment>
<comment type="similarity">
    <text evidence="1">Belongs to the universal ribosomal protein uS17 family.</text>
</comment>
<comment type="sequence caution" evidence="2">
    <conflict type="erroneous initiation">
        <sequence resource="EMBL-CDS" id="CAH58330"/>
    </conflict>
</comment>
<gene>
    <name evidence="1" type="primary">rpsQ</name>
    <name type="ordered locus">Erum5990</name>
    <name type="ordered locus">ERWE_CDS_06290</name>
</gene>
<protein>
    <recommendedName>
        <fullName evidence="1">Small ribosomal subunit protein uS17</fullName>
    </recommendedName>
    <alternativeName>
        <fullName evidence="2">30S ribosomal protein S17</fullName>
    </alternativeName>
</protein>
<organism>
    <name type="scientific">Ehrlichia ruminantium (strain Welgevonden)</name>
    <dbReference type="NCBI Taxonomy" id="254945"/>
    <lineage>
        <taxon>Bacteria</taxon>
        <taxon>Pseudomonadati</taxon>
        <taxon>Pseudomonadota</taxon>
        <taxon>Alphaproteobacteria</taxon>
        <taxon>Rickettsiales</taxon>
        <taxon>Anaplasmataceae</taxon>
        <taxon>Ehrlichia</taxon>
    </lineage>
</organism>
<name>RS17_EHRRW</name>
<sequence length="82" mass="9724">MKERMRSRMSKQVLTGVVVGAKCDKTIKVMVSRMVSHKMYKKIVKKRKNYVVHDEYNRYKCGDVVQIREHIPISATKRWVVI</sequence>
<proteinExistence type="inferred from homology"/>
<reference key="1">
    <citation type="journal article" date="2005" name="Proc. Natl. Acad. Sci. U.S.A.">
        <title>The genome of the heartwater agent Ehrlichia ruminantium contains multiple tandem repeats of actively variable copy number.</title>
        <authorList>
            <person name="Collins N.E."/>
            <person name="Liebenberg J."/>
            <person name="de Villiers E.P."/>
            <person name="Brayton K.A."/>
            <person name="Louw E."/>
            <person name="Pretorius A."/>
            <person name="Faber F.E."/>
            <person name="van Heerden H."/>
            <person name="Josemans A."/>
            <person name="van Kleef M."/>
            <person name="Steyn H.C."/>
            <person name="van Strijp M.F."/>
            <person name="Zweygarth E."/>
            <person name="Jongejan F."/>
            <person name="Maillard J.C."/>
            <person name="Berthier D."/>
            <person name="Botha M."/>
            <person name="Joubert F."/>
            <person name="Corton C.H."/>
            <person name="Thomson N.R."/>
            <person name="Allsopp M.T."/>
            <person name="Allsopp B.A."/>
        </authorList>
    </citation>
    <scope>NUCLEOTIDE SEQUENCE [LARGE SCALE GENOMIC DNA]</scope>
    <source>
        <strain>Welgevonden</strain>
    </source>
</reference>
<reference key="2">
    <citation type="journal article" date="2006" name="J. Bacteriol.">
        <title>Comparative genomic analysis of three strains of Ehrlichia ruminantium reveals an active process of genome size plasticity.</title>
        <authorList>
            <person name="Frutos R."/>
            <person name="Viari A."/>
            <person name="Ferraz C."/>
            <person name="Morgat A."/>
            <person name="Eychenie S."/>
            <person name="Kandassamy Y."/>
            <person name="Chantal I."/>
            <person name="Bensaid A."/>
            <person name="Coissac E."/>
            <person name="Vachiery N."/>
            <person name="Demaille J."/>
            <person name="Martinez D."/>
        </authorList>
    </citation>
    <scope>NUCLEOTIDE SEQUENCE [LARGE SCALE GENOMIC DNA]</scope>
    <source>
        <strain>Welgevonden</strain>
    </source>
</reference>
<keyword id="KW-0687">Ribonucleoprotein</keyword>
<keyword id="KW-0689">Ribosomal protein</keyword>
<keyword id="KW-0694">RNA-binding</keyword>
<keyword id="KW-0699">rRNA-binding</keyword>